<proteinExistence type="inferred from homology"/>
<organism>
    <name type="scientific">Paraburkholderia xenovorans (strain LB400)</name>
    <dbReference type="NCBI Taxonomy" id="266265"/>
    <lineage>
        <taxon>Bacteria</taxon>
        <taxon>Pseudomonadati</taxon>
        <taxon>Pseudomonadota</taxon>
        <taxon>Betaproteobacteria</taxon>
        <taxon>Burkholderiales</taxon>
        <taxon>Burkholderiaceae</taxon>
        <taxon>Paraburkholderia</taxon>
    </lineage>
</organism>
<comment type="catalytic activity">
    <reaction evidence="1">
        <text>acetaldehyde + NAD(+) + CoA = acetyl-CoA + NADH + H(+)</text>
        <dbReference type="Rhea" id="RHEA:23288"/>
        <dbReference type="ChEBI" id="CHEBI:15343"/>
        <dbReference type="ChEBI" id="CHEBI:15378"/>
        <dbReference type="ChEBI" id="CHEBI:57287"/>
        <dbReference type="ChEBI" id="CHEBI:57288"/>
        <dbReference type="ChEBI" id="CHEBI:57540"/>
        <dbReference type="ChEBI" id="CHEBI:57945"/>
        <dbReference type="EC" id="1.2.1.10"/>
    </reaction>
</comment>
<comment type="similarity">
    <text evidence="1">Belongs to the acetaldehyde dehydrogenase family.</text>
</comment>
<gene>
    <name type="ordered locus">Bxeno_A0903</name>
    <name type="ORF">Bxe_A3547</name>
</gene>
<name>ACDH1_PARXL</name>
<reference key="1">
    <citation type="journal article" date="2006" name="Proc. Natl. Acad. Sci. U.S.A.">
        <title>Burkholderia xenovorans LB400 harbors a multi-replicon, 9.73-Mbp genome shaped for versatility.</title>
        <authorList>
            <person name="Chain P.S.G."/>
            <person name="Denef V.J."/>
            <person name="Konstantinidis K.T."/>
            <person name="Vergez L.M."/>
            <person name="Agullo L."/>
            <person name="Reyes V.L."/>
            <person name="Hauser L."/>
            <person name="Cordova M."/>
            <person name="Gomez L."/>
            <person name="Gonzalez M."/>
            <person name="Land M."/>
            <person name="Lao V."/>
            <person name="Larimer F."/>
            <person name="LiPuma J.J."/>
            <person name="Mahenthiralingam E."/>
            <person name="Malfatti S.A."/>
            <person name="Marx C.J."/>
            <person name="Parnell J.J."/>
            <person name="Ramette A."/>
            <person name="Richardson P."/>
            <person name="Seeger M."/>
            <person name="Smith D."/>
            <person name="Spilker T."/>
            <person name="Sul W.J."/>
            <person name="Tsoi T.V."/>
            <person name="Ulrich L.E."/>
            <person name="Zhulin I.B."/>
            <person name="Tiedje J.M."/>
        </authorList>
    </citation>
    <scope>NUCLEOTIDE SEQUENCE [LARGE SCALE GENOMIC DNA]</scope>
    <source>
        <strain>LB400</strain>
    </source>
</reference>
<dbReference type="EC" id="1.2.1.10" evidence="1"/>
<dbReference type="EMBL" id="CP000270">
    <property type="protein sequence ID" value="ABE29441.1"/>
    <property type="molecule type" value="Genomic_DNA"/>
</dbReference>
<dbReference type="RefSeq" id="WP_011487209.1">
    <property type="nucleotide sequence ID" value="NC_007951.1"/>
</dbReference>
<dbReference type="SMR" id="Q143P8"/>
<dbReference type="STRING" id="266265.Bxe_A3547"/>
<dbReference type="KEGG" id="bxb:DR64_1246"/>
<dbReference type="KEGG" id="bxe:Bxe_A3547"/>
<dbReference type="eggNOG" id="COG4569">
    <property type="taxonomic scope" value="Bacteria"/>
</dbReference>
<dbReference type="OrthoDB" id="9786743at2"/>
<dbReference type="Proteomes" id="UP000001817">
    <property type="component" value="Chromosome 1"/>
</dbReference>
<dbReference type="GO" id="GO:0008774">
    <property type="term" value="F:acetaldehyde dehydrogenase (acetylating) activity"/>
    <property type="evidence" value="ECO:0007669"/>
    <property type="project" value="UniProtKB-UniRule"/>
</dbReference>
<dbReference type="GO" id="GO:0051287">
    <property type="term" value="F:NAD binding"/>
    <property type="evidence" value="ECO:0007669"/>
    <property type="project" value="UniProtKB-UniRule"/>
</dbReference>
<dbReference type="GO" id="GO:0009056">
    <property type="term" value="P:catabolic process"/>
    <property type="evidence" value="ECO:0007669"/>
    <property type="project" value="UniProtKB-KW"/>
</dbReference>
<dbReference type="CDD" id="cd23933">
    <property type="entry name" value="ALDH_C"/>
    <property type="match status" value="1"/>
</dbReference>
<dbReference type="Gene3D" id="3.30.360.10">
    <property type="entry name" value="Dihydrodipicolinate Reductase, domain 2"/>
    <property type="match status" value="1"/>
</dbReference>
<dbReference type="Gene3D" id="3.40.50.720">
    <property type="entry name" value="NAD(P)-binding Rossmann-like Domain"/>
    <property type="match status" value="1"/>
</dbReference>
<dbReference type="HAMAP" id="MF_01657">
    <property type="entry name" value="Ac_ald_DH_ac"/>
    <property type="match status" value="1"/>
</dbReference>
<dbReference type="InterPro" id="IPR003361">
    <property type="entry name" value="Acetaldehyde_dehydrogenase"/>
</dbReference>
<dbReference type="InterPro" id="IPR015426">
    <property type="entry name" value="Acetylaldehyde_DH_C"/>
</dbReference>
<dbReference type="InterPro" id="IPR036291">
    <property type="entry name" value="NAD(P)-bd_dom_sf"/>
</dbReference>
<dbReference type="InterPro" id="IPR000534">
    <property type="entry name" value="Semialdehyde_DH_NAD-bd"/>
</dbReference>
<dbReference type="NCBIfam" id="TIGR03215">
    <property type="entry name" value="ac_ald_DH_ac"/>
    <property type="match status" value="1"/>
</dbReference>
<dbReference type="NCBIfam" id="NF006157">
    <property type="entry name" value="PRK08300.1"/>
    <property type="match status" value="1"/>
</dbReference>
<dbReference type="Pfam" id="PF09290">
    <property type="entry name" value="AcetDehyd-dimer"/>
    <property type="match status" value="1"/>
</dbReference>
<dbReference type="Pfam" id="PF01118">
    <property type="entry name" value="Semialdhyde_dh"/>
    <property type="match status" value="1"/>
</dbReference>
<dbReference type="PIRSF" id="PIRSF015689">
    <property type="entry name" value="Actaldh_dh_actl"/>
    <property type="match status" value="1"/>
</dbReference>
<dbReference type="SMART" id="SM00859">
    <property type="entry name" value="Semialdhyde_dh"/>
    <property type="match status" value="1"/>
</dbReference>
<dbReference type="SUPFAM" id="SSF55347">
    <property type="entry name" value="Glyceraldehyde-3-phosphate dehydrogenase-like, C-terminal domain"/>
    <property type="match status" value="1"/>
</dbReference>
<dbReference type="SUPFAM" id="SSF51735">
    <property type="entry name" value="NAD(P)-binding Rossmann-fold domains"/>
    <property type="match status" value="1"/>
</dbReference>
<keyword id="KW-0058">Aromatic hydrocarbons catabolism</keyword>
<keyword id="KW-0520">NAD</keyword>
<keyword id="KW-0560">Oxidoreductase</keyword>
<keyword id="KW-1185">Reference proteome</keyword>
<sequence length="314" mass="33253">MSSNDEKHAVAIIGSGNIGTDLMVKILRHGKHLKMGAFVGIDPESDGLKRAERMGVPTVTTGIDGLLAHPDFGSIRYVFDATSAGAHARHEQLLRPHGVRVIDLTPAAIGPFVVPAVNIDQHLDSPNVNMVTCGGQATIPMVAAVSRVVPVEYAEIVASISSRSAGPGTRANIDEFTETTSNAIVQVGGAKAGKAIIVLNPAEPPLIMRDTVYCLVPGDASQSAIVESVEQMVDSVRTYVPGYRLKQAVQFDEFKGRMPQELATVRAPRLKVSVFLEVEGAGHYLPSYAGNLDIMTSAALATAERIAARQPVTA</sequence>
<accession>Q143P8</accession>
<feature type="chain" id="PRO_0000387644" description="Acetaldehyde dehydrogenase 1">
    <location>
        <begin position="1"/>
        <end position="314"/>
    </location>
</feature>
<feature type="active site" description="Acyl-thioester intermediate" evidence="1">
    <location>
        <position position="133"/>
    </location>
</feature>
<feature type="binding site" evidence="1">
    <location>
        <begin position="15"/>
        <end position="18"/>
    </location>
    <ligand>
        <name>NAD(+)</name>
        <dbReference type="ChEBI" id="CHEBI:57540"/>
    </ligand>
</feature>
<feature type="binding site" evidence="1">
    <location>
        <begin position="164"/>
        <end position="172"/>
    </location>
    <ligand>
        <name>NAD(+)</name>
        <dbReference type="ChEBI" id="CHEBI:57540"/>
    </ligand>
</feature>
<feature type="binding site" evidence="1">
    <location>
        <position position="291"/>
    </location>
    <ligand>
        <name>NAD(+)</name>
        <dbReference type="ChEBI" id="CHEBI:57540"/>
    </ligand>
</feature>
<evidence type="ECO:0000255" key="1">
    <source>
        <dbReference type="HAMAP-Rule" id="MF_01657"/>
    </source>
</evidence>
<protein>
    <recommendedName>
        <fullName evidence="1">Acetaldehyde dehydrogenase 1</fullName>
        <ecNumber evidence="1">1.2.1.10</ecNumber>
    </recommendedName>
    <alternativeName>
        <fullName evidence="1">Acetaldehyde dehydrogenase [acetylating] 1</fullName>
    </alternativeName>
</protein>